<feature type="signal peptide" evidence="2">
    <location>
        <begin position="1"/>
        <end position="21"/>
    </location>
</feature>
<feature type="chain" id="PRO_0000407533" description="Vacuolar protein sorting/targeting protein 10">
    <location>
        <begin position="22"/>
        <end position="1491"/>
    </location>
</feature>
<feature type="topological domain" description="Lumenal" evidence="2">
    <location>
        <begin position="22"/>
        <end position="1354"/>
    </location>
</feature>
<feature type="transmembrane region" description="Helical" evidence="2">
    <location>
        <begin position="1355"/>
        <end position="1375"/>
    </location>
</feature>
<feature type="topological domain" description="Cytoplasmic" evidence="2">
    <location>
        <begin position="1376"/>
        <end position="1405"/>
    </location>
</feature>
<feature type="transmembrane region" description="Helical" evidence="2">
    <location>
        <begin position="1406"/>
        <end position="1426"/>
    </location>
</feature>
<feature type="topological domain" description="Lumenal" evidence="2">
    <location>
        <begin position="1427"/>
        <end position="1491"/>
    </location>
</feature>
<feature type="repeat" description="BNR 1">
    <location>
        <begin position="97"/>
        <end position="107"/>
    </location>
</feature>
<feature type="repeat" description="BNR 2">
    <location>
        <begin position="364"/>
        <end position="374"/>
    </location>
</feature>
<feature type="repeat" description="BNR 3">
    <location>
        <begin position="426"/>
        <end position="436"/>
    </location>
</feature>
<feature type="repeat" description="BNR 4">
    <location>
        <begin position="719"/>
        <end position="730"/>
    </location>
</feature>
<feature type="repeat" description="BNR 5">
    <location>
        <begin position="1102"/>
        <end position="1112"/>
    </location>
</feature>
<feature type="repeat" description="BNR 6">
    <location>
        <begin position="1143"/>
        <end position="1153"/>
    </location>
</feature>
<feature type="region of interest" description="Disordered" evidence="3">
    <location>
        <begin position="640"/>
        <end position="667"/>
    </location>
</feature>
<feature type="region of interest" description="Disordered" evidence="3">
    <location>
        <begin position="1018"/>
        <end position="1047"/>
    </location>
</feature>
<feature type="region of interest" description="Disordered" evidence="3">
    <location>
        <begin position="1464"/>
        <end position="1491"/>
    </location>
</feature>
<feature type="compositionally biased region" description="Basic and acidic residues" evidence="3">
    <location>
        <begin position="647"/>
        <end position="667"/>
    </location>
</feature>
<feature type="compositionally biased region" description="Basic and acidic residues" evidence="3">
    <location>
        <begin position="1038"/>
        <end position="1047"/>
    </location>
</feature>
<feature type="compositionally biased region" description="Acidic residues" evidence="3">
    <location>
        <begin position="1475"/>
        <end position="1491"/>
    </location>
</feature>
<feature type="glycosylation site" description="N-linked (GlcNAc...) asparagine" evidence="2">
    <location>
        <position position="285"/>
    </location>
</feature>
<feature type="glycosylation site" description="N-linked (GlcNAc...) asparagine" evidence="2">
    <location>
        <position position="309"/>
    </location>
</feature>
<feature type="glycosylation site" description="N-linked (GlcNAc...) asparagine" evidence="2">
    <location>
        <position position="970"/>
    </location>
</feature>
<feature type="glycosylation site" description="N-linked (GlcNAc...) asparagine" evidence="2">
    <location>
        <position position="1265"/>
    </location>
</feature>
<organism>
    <name type="scientific">Pyrenophora tritici-repentis (strain Pt-1C-BFP)</name>
    <name type="common">Wheat tan spot fungus</name>
    <name type="synonym">Drechslera tritici-repentis</name>
    <dbReference type="NCBI Taxonomy" id="426418"/>
    <lineage>
        <taxon>Eukaryota</taxon>
        <taxon>Fungi</taxon>
        <taxon>Dikarya</taxon>
        <taxon>Ascomycota</taxon>
        <taxon>Pezizomycotina</taxon>
        <taxon>Dothideomycetes</taxon>
        <taxon>Pleosporomycetidae</taxon>
        <taxon>Pleosporales</taxon>
        <taxon>Pleosporineae</taxon>
        <taxon>Pleosporaceae</taxon>
        <taxon>Pyrenophora</taxon>
    </lineage>
</organism>
<dbReference type="EMBL" id="DS231622">
    <property type="protein sequence ID" value="EDU51027.1"/>
    <property type="molecule type" value="Genomic_DNA"/>
</dbReference>
<dbReference type="RefSeq" id="XP_001938440.1">
    <property type="nucleotide sequence ID" value="XM_001938405.1"/>
</dbReference>
<dbReference type="SMR" id="B2WDP9"/>
<dbReference type="FunCoup" id="B2WDP9">
    <property type="interactions" value="181"/>
</dbReference>
<dbReference type="STRING" id="426418.B2WDP9"/>
<dbReference type="GlyCosmos" id="B2WDP9">
    <property type="glycosylation" value="4 sites, No reported glycans"/>
</dbReference>
<dbReference type="EnsemblFungi" id="EDU51027">
    <property type="protein sequence ID" value="EDU51027"/>
    <property type="gene ID" value="PTRG_08108"/>
</dbReference>
<dbReference type="GeneID" id="6346387"/>
<dbReference type="KEGG" id="ptrr:6346387"/>
<dbReference type="eggNOG" id="KOG3511">
    <property type="taxonomic scope" value="Eukaryota"/>
</dbReference>
<dbReference type="HOGENOM" id="CLU_000700_0_0_1"/>
<dbReference type="InParanoid" id="B2WDP9"/>
<dbReference type="OMA" id="ATMSEFI"/>
<dbReference type="OrthoDB" id="14638at28556"/>
<dbReference type="Proteomes" id="UP000001471">
    <property type="component" value="Unassembled WGS sequence"/>
</dbReference>
<dbReference type="GO" id="GO:0005829">
    <property type="term" value="C:cytosol"/>
    <property type="evidence" value="ECO:0007669"/>
    <property type="project" value="GOC"/>
</dbReference>
<dbReference type="GO" id="GO:0005794">
    <property type="term" value="C:Golgi apparatus"/>
    <property type="evidence" value="ECO:0007669"/>
    <property type="project" value="UniProtKB-SubCell"/>
</dbReference>
<dbReference type="GO" id="GO:0016020">
    <property type="term" value="C:membrane"/>
    <property type="evidence" value="ECO:0007669"/>
    <property type="project" value="UniProtKB-KW"/>
</dbReference>
<dbReference type="GO" id="GO:0006895">
    <property type="term" value="P:Golgi to endosome transport"/>
    <property type="evidence" value="ECO:0007669"/>
    <property type="project" value="TreeGrafter"/>
</dbReference>
<dbReference type="GO" id="GO:0006896">
    <property type="term" value="P:Golgi to vacuole transport"/>
    <property type="evidence" value="ECO:0007669"/>
    <property type="project" value="TreeGrafter"/>
</dbReference>
<dbReference type="GO" id="GO:0006623">
    <property type="term" value="P:protein targeting to vacuole"/>
    <property type="evidence" value="ECO:0007669"/>
    <property type="project" value="TreeGrafter"/>
</dbReference>
<dbReference type="FunFam" id="3.30.60.270:FF:000005">
    <property type="entry name" value="Sortilin"/>
    <property type="match status" value="1"/>
</dbReference>
<dbReference type="Gene3D" id="2.10.70.80">
    <property type="match status" value="2"/>
</dbReference>
<dbReference type="Gene3D" id="3.30.60.270">
    <property type="match status" value="2"/>
</dbReference>
<dbReference type="Gene3D" id="2.130.10.10">
    <property type="entry name" value="YVTN repeat-like/Quinoprotein amine dehydrogenase"/>
    <property type="match status" value="1"/>
</dbReference>
<dbReference type="InterPro" id="IPR031777">
    <property type="entry name" value="Sortilin_C"/>
</dbReference>
<dbReference type="InterPro" id="IPR031778">
    <property type="entry name" value="Sortilin_N"/>
</dbReference>
<dbReference type="InterPro" id="IPR006581">
    <property type="entry name" value="VPS10"/>
</dbReference>
<dbReference type="InterPro" id="IPR050310">
    <property type="entry name" value="VPS10-sortilin"/>
</dbReference>
<dbReference type="InterPro" id="IPR015943">
    <property type="entry name" value="WD40/YVTN_repeat-like_dom_sf"/>
</dbReference>
<dbReference type="PANTHER" id="PTHR12106">
    <property type="entry name" value="SORTILIN RELATED"/>
    <property type="match status" value="1"/>
</dbReference>
<dbReference type="PANTHER" id="PTHR12106:SF27">
    <property type="entry name" value="SORTILIN-RELATED RECEPTOR"/>
    <property type="match status" value="1"/>
</dbReference>
<dbReference type="Pfam" id="PF15902">
    <property type="entry name" value="Sortilin-Vps10"/>
    <property type="match status" value="2"/>
</dbReference>
<dbReference type="Pfam" id="PF15901">
    <property type="entry name" value="Sortilin_C"/>
    <property type="match status" value="2"/>
</dbReference>
<dbReference type="SMART" id="SM00602">
    <property type="entry name" value="VPS10"/>
    <property type="match status" value="2"/>
</dbReference>
<dbReference type="SUPFAM" id="SSF110296">
    <property type="entry name" value="Oligoxyloglucan reducing end-specific cellobiohydrolase"/>
    <property type="match status" value="2"/>
</dbReference>
<accession>B2WDP9</accession>
<reference key="1">
    <citation type="journal article" date="2013" name="G3 (Bethesda)">
        <title>Comparative genomics of a plant-pathogenic fungus, Pyrenophora tritici-repentis, reveals transduplication and the impact of repeat elements on pathogenicity and population divergence.</title>
        <authorList>
            <person name="Manning V.A."/>
            <person name="Pandelova I."/>
            <person name="Dhillon B."/>
            <person name="Wilhelm L.J."/>
            <person name="Goodwin S.B."/>
            <person name="Berlin A.M."/>
            <person name="Figueroa M."/>
            <person name="Freitag M."/>
            <person name="Hane J.K."/>
            <person name="Henrissat B."/>
            <person name="Holman W.H."/>
            <person name="Kodira C.D."/>
            <person name="Martin J."/>
            <person name="Oliver R.P."/>
            <person name="Robbertse B."/>
            <person name="Schackwitz W."/>
            <person name="Schwartz D.C."/>
            <person name="Spatafora J.W."/>
            <person name="Turgeon B.G."/>
            <person name="Yandava C."/>
            <person name="Young S."/>
            <person name="Zhou S."/>
            <person name="Zeng Q."/>
            <person name="Grigoriev I.V."/>
            <person name="Ma L.-J."/>
            <person name="Ciuffetti L.M."/>
        </authorList>
    </citation>
    <scope>NUCLEOTIDE SEQUENCE [LARGE SCALE GENOMIC DNA]</scope>
    <source>
        <strain>Pt-1C-BFP</strain>
    </source>
</reference>
<comment type="function">
    <text evidence="1">Functions as a sorting receptor in the Golgi compartment required for the intracellular sorting and delivery of soluble vacuolar proteins, like carboxypeptidase Y (CPY) and proteinase A. Executes multiple rounds of sorting by cycling between the late Golgi and a prevacuolar endosome-like compartment (By similarity).</text>
</comment>
<comment type="subcellular location">
    <subcellularLocation>
        <location evidence="1">Golgi apparatus</location>
        <location evidence="1">trans-Golgi network membrane</location>
        <topology evidence="1">Multi-pass membrane protein</topology>
    </subcellularLocation>
    <subcellularLocation>
        <location evidence="1">Prevacuolar compartment membrane</location>
        <topology evidence="1">Multi-pass membrane protein</topology>
    </subcellularLocation>
    <text evidence="1">Cycles between the Golgi apparatus and the prevacuolar compartment.</text>
</comment>
<comment type="similarity">
    <text evidence="4">Belongs to the VPS10-related sortilin family.</text>
</comment>
<sequence length="1491" mass="167576">MKHLKGLLLPALLALASSAAAKDPLVETTPFKNELVNLMYFDDSGVALVQELDNGKIFRSHDAGKGWKEIKDVQGLGIIKSPYDNKVALILGEKKHWITYDQGENWDSFETKLPPSPQGPVGWHAQDNKKILLNEIENCFTAPCLGKTYYTTDGFKTDPKTLVDDRRMCQWAKASERFLQGVDKHDDRILCITRGKYSDRSKDFRLLMSDNFFKETEEPVMSSGRTVQGMANMAAVKGYIVAAAKAEHSSELALYVTQDTDSWHHARFGDHKIEEDAYTILESTNYSIQVDVMTSKYVTMGNLYTSNSNGTYFTKNVEHTNRNDAGYVDFEKIANIQGVVLVNTVDNYKEVEKSGQSKKLKSRISFDDGRSFEKLTVKGKDGELHLHSVTNLHNSGRVFSSPAPGIVMGVGNTGDYLGKYTDGDLYVSDDAGLTWELALEEAHKYEFGDQGSVLVAVFDEGDTDEIRYSFKHGRKDTWQKIKLDYKIRARELTTLPDSTSLKFMIYGSRKKDGGGREHVIVHLDFSDMLKKCGDSDFDDEWSVRKDADGDPSCVMGHKQLFRRRKWDAECSVGELFKDPVPKFKPCDCDKFRDYECDFNFTPTGEGKDKKCEPSESFSLPKGACEGDAKSYKGSSGWRKIPGNQCKGETERDKQVERECKDAERPRPKTDKITSEITKFKGSNFMEQYYLERNTQSDGTDNDRGKDETVVMLTDERTAYITHDHGKKWKKAVDDEIVRIYPHQYENNNVYFLTASKKVYYSKDRGLHDSINSFEAPVMPNTEMLPIMQFHPKQKDWIIWLGGKNCEKLGNKDCHTVAYVSQKNGEDSSWESLVPYVKKCAFVWREAGRSVKEEQVFCEQHTNEEKNAPLELISSDDWFKKKDVKFKSVVEFATMSEFIIVATKAEDNTLHLDASLDAHTFAEAKFPPKFFDIHQTAYTVLDSSTHAVFLHVTVNPQRDQEYGSIIKSNSNGTSYVMSLAAVNRNTEGYVDFEKMQGLEGVAVANVIVNVDEVNKGAKKKKQSRITHNDGADWEPLQAPEKDSDDKPYDCDIADKKKCGLHIHGYTERADPREMYSSPTAVGLMLAVGNVGPELTTFGEANTFMTTDAGITWKEVKKGTYAWEFGDQGSVIVIVRRGEDTDHVYYSVDSGAKWDLYQFADHKMRVDAITTVPSDTSLNFLLWGKDSRELFAVNLDFSGLPEFQKECKLDENDPTKGDYDLWSPQHPLQQDEPECLFGHVAQYHRKKRDVKCRNGQRIDQMHDIARNCSCTRRDFECAYNYERDSSGDCVLVPGLSLPDPAKVCSNKNVKEYYSNTRFRKIPLSTCQGGTEYDKTGDVHPCPGFEEDFKKNHGVGGFTLFLAIVLPFAAAAGVGYWVWRNWDGKFGRIRLGEPGGGSAFDSDAPWVRWPIAAVSGLVAVGAALPLVVGSVWRWVVGRMGGRGGGGGGYSGLGGSGFGRAYTSRSSFARGRGEYSVVDPDEGELLGDEESDEDV</sequence>
<keyword id="KW-0325">Glycoprotein</keyword>
<keyword id="KW-0333">Golgi apparatus</keyword>
<keyword id="KW-0472">Membrane</keyword>
<keyword id="KW-0653">Protein transport</keyword>
<keyword id="KW-0675">Receptor</keyword>
<keyword id="KW-1185">Reference proteome</keyword>
<keyword id="KW-0677">Repeat</keyword>
<keyword id="KW-0732">Signal</keyword>
<keyword id="KW-0812">Transmembrane</keyword>
<keyword id="KW-1133">Transmembrane helix</keyword>
<keyword id="KW-0813">Transport</keyword>
<evidence type="ECO:0000250" key="1"/>
<evidence type="ECO:0000255" key="2"/>
<evidence type="ECO:0000256" key="3">
    <source>
        <dbReference type="SAM" id="MobiDB-lite"/>
    </source>
</evidence>
<evidence type="ECO:0000305" key="4"/>
<proteinExistence type="inferred from homology"/>
<gene>
    <name type="primary">vps10</name>
    <name type="ORF">PTRG_08108</name>
</gene>
<protein>
    <recommendedName>
        <fullName>Vacuolar protein sorting/targeting protein 10</fullName>
    </recommendedName>
    <alternativeName>
        <fullName>Carboxypeptidase Y receptor</fullName>
        <shortName>CPY receptor</shortName>
    </alternativeName>
    <alternativeName>
        <fullName>Sortilin vps10</fullName>
    </alternativeName>
    <alternativeName>
        <fullName>Vacuolar carboxypeptidase sorting receptor vps10</fullName>
    </alternativeName>
</protein>
<name>VPS10_PYRTR</name>